<organism>
    <name type="scientific">Aquifex aeolicus (strain VF5)</name>
    <dbReference type="NCBI Taxonomy" id="224324"/>
    <lineage>
        <taxon>Bacteria</taxon>
        <taxon>Pseudomonadati</taxon>
        <taxon>Aquificota</taxon>
        <taxon>Aquificia</taxon>
        <taxon>Aquificales</taxon>
        <taxon>Aquificaceae</taxon>
        <taxon>Aquifex</taxon>
    </lineage>
</organism>
<name>FLAV_AQUAE</name>
<feature type="chain" id="PRO_0000171602" description="Flavodoxin">
    <location>
        <begin position="1"/>
        <end position="185"/>
    </location>
</feature>
<feature type="domain" description="Flavodoxin-like" evidence="2">
    <location>
        <begin position="4"/>
        <end position="159"/>
    </location>
</feature>
<feature type="strand" evidence="4">
    <location>
        <begin position="2"/>
        <end position="8"/>
    </location>
</feature>
<feature type="strand" evidence="4">
    <location>
        <begin position="11"/>
        <end position="13"/>
    </location>
</feature>
<feature type="helix" evidence="4">
    <location>
        <begin position="14"/>
        <end position="27"/>
    </location>
</feature>
<feature type="strand" evidence="4">
    <location>
        <begin position="32"/>
        <end position="38"/>
    </location>
</feature>
<feature type="turn" evidence="4">
    <location>
        <begin position="39"/>
        <end position="41"/>
    </location>
</feature>
<feature type="helix" evidence="4">
    <location>
        <begin position="44"/>
        <end position="49"/>
    </location>
</feature>
<feature type="strand" evidence="4">
    <location>
        <begin position="51"/>
        <end position="58"/>
    </location>
</feature>
<feature type="helix" evidence="4">
    <location>
        <begin position="66"/>
        <end position="74"/>
    </location>
</feature>
<feature type="helix" evidence="4">
    <location>
        <begin position="76"/>
        <end position="78"/>
    </location>
</feature>
<feature type="turn" evidence="4">
    <location>
        <begin position="79"/>
        <end position="81"/>
    </location>
</feature>
<feature type="strand" evidence="4">
    <location>
        <begin position="87"/>
        <end position="97"/>
    </location>
</feature>
<feature type="helix" evidence="4">
    <location>
        <begin position="101"/>
        <end position="114"/>
    </location>
</feature>
<feature type="strand" evidence="4">
    <location>
        <begin position="122"/>
        <end position="127"/>
    </location>
</feature>
<feature type="strand" evidence="4">
    <location>
        <begin position="130"/>
        <end position="141"/>
    </location>
</feature>
<feature type="helix" evidence="4">
    <location>
        <begin position="145"/>
        <end position="165"/>
    </location>
</feature>
<feature type="helix" evidence="4">
    <location>
        <begin position="172"/>
        <end position="178"/>
    </location>
</feature>
<feature type="helix" evidence="4">
    <location>
        <begin position="180"/>
        <end position="182"/>
    </location>
</feature>
<comment type="function">
    <text evidence="1">Low-potential electron donor to a number of redox enzymes.</text>
</comment>
<comment type="cofactor">
    <cofactor evidence="1">
        <name>FMN</name>
        <dbReference type="ChEBI" id="CHEBI:58210"/>
    </cofactor>
</comment>
<comment type="similarity">
    <text evidence="3">Belongs to the flavodoxin family.</text>
</comment>
<dbReference type="EMBL" id="AE000657">
    <property type="protein sequence ID" value="AAC07825.1"/>
    <property type="molecule type" value="Genomic_DNA"/>
</dbReference>
<dbReference type="PIR" id="F70479">
    <property type="entry name" value="F70479"/>
</dbReference>
<dbReference type="RefSeq" id="NP_214435.1">
    <property type="nucleotide sequence ID" value="NC_000918.1"/>
</dbReference>
<dbReference type="RefSeq" id="WP_010881371.1">
    <property type="nucleotide sequence ID" value="NC_000918.1"/>
</dbReference>
<dbReference type="PDB" id="2ARK">
    <property type="method" value="X-ray"/>
    <property type="resolution" value="2.40 A"/>
    <property type="chains" value="A/B/C/D/E/F=1-185"/>
</dbReference>
<dbReference type="PDBsum" id="2ARK"/>
<dbReference type="SMR" id="O67866"/>
<dbReference type="FunCoup" id="O67866">
    <property type="interactions" value="273"/>
</dbReference>
<dbReference type="STRING" id="224324.aq_2096"/>
<dbReference type="EnsemblBacteria" id="AAC07825">
    <property type="protein sequence ID" value="AAC07825"/>
    <property type="gene ID" value="aq_2096"/>
</dbReference>
<dbReference type="KEGG" id="aae:aq_2096"/>
<dbReference type="eggNOG" id="COG0655">
    <property type="taxonomic scope" value="Bacteria"/>
</dbReference>
<dbReference type="HOGENOM" id="CLU_051402_2_0_0"/>
<dbReference type="InParanoid" id="O67866"/>
<dbReference type="OrthoDB" id="9801479at2"/>
<dbReference type="EvolutionaryTrace" id="O67866"/>
<dbReference type="Proteomes" id="UP000000798">
    <property type="component" value="Chromosome"/>
</dbReference>
<dbReference type="GO" id="GO:0016020">
    <property type="term" value="C:membrane"/>
    <property type="evidence" value="ECO:0000318"/>
    <property type="project" value="GO_Central"/>
</dbReference>
<dbReference type="GO" id="GO:0009055">
    <property type="term" value="F:electron transfer activity"/>
    <property type="evidence" value="ECO:0007669"/>
    <property type="project" value="InterPro"/>
</dbReference>
<dbReference type="GO" id="GO:0010181">
    <property type="term" value="F:FMN binding"/>
    <property type="evidence" value="ECO:0007669"/>
    <property type="project" value="InterPro"/>
</dbReference>
<dbReference type="GO" id="GO:0003955">
    <property type="term" value="F:NAD(P)H dehydrogenase (quinone) activity"/>
    <property type="evidence" value="ECO:0000318"/>
    <property type="project" value="GO_Central"/>
</dbReference>
<dbReference type="FunFam" id="3.40.50.360:FF:000069">
    <property type="entry name" value="Flavodoxin"/>
    <property type="match status" value="1"/>
</dbReference>
<dbReference type="Gene3D" id="3.40.50.360">
    <property type="match status" value="1"/>
</dbReference>
<dbReference type="InterPro" id="IPR008254">
    <property type="entry name" value="Flavodoxin/NO_synth"/>
</dbReference>
<dbReference type="InterPro" id="IPR001226">
    <property type="entry name" value="Flavodoxin_CS"/>
</dbReference>
<dbReference type="InterPro" id="IPR029039">
    <property type="entry name" value="Flavoprotein-like_sf"/>
</dbReference>
<dbReference type="PANTHER" id="PTHR30546">
    <property type="entry name" value="FLAVODOXIN-RELATED PROTEIN WRBA-RELATED"/>
    <property type="match status" value="1"/>
</dbReference>
<dbReference type="PANTHER" id="PTHR30546:SF23">
    <property type="entry name" value="FLAVOPROTEIN-LIKE PROTEIN YCP4-RELATED"/>
    <property type="match status" value="1"/>
</dbReference>
<dbReference type="Pfam" id="PF00258">
    <property type="entry name" value="Flavodoxin_1"/>
    <property type="match status" value="1"/>
</dbReference>
<dbReference type="SUPFAM" id="SSF52218">
    <property type="entry name" value="Flavoproteins"/>
    <property type="match status" value="1"/>
</dbReference>
<dbReference type="PROSITE" id="PS00201">
    <property type="entry name" value="FLAVODOXIN"/>
    <property type="match status" value="1"/>
</dbReference>
<dbReference type="PROSITE" id="PS50902">
    <property type="entry name" value="FLAVODOXIN_LIKE"/>
    <property type="match status" value="1"/>
</dbReference>
<reference key="1">
    <citation type="journal article" date="1998" name="Nature">
        <title>The complete genome of the hyperthermophilic bacterium Aquifex aeolicus.</title>
        <authorList>
            <person name="Deckert G."/>
            <person name="Warren P.V."/>
            <person name="Gaasterland T."/>
            <person name="Young W.G."/>
            <person name="Lenox A.L."/>
            <person name="Graham D.E."/>
            <person name="Overbeek R."/>
            <person name="Snead M.A."/>
            <person name="Keller M."/>
            <person name="Aujay M."/>
            <person name="Huber R."/>
            <person name="Feldman R.A."/>
            <person name="Short J.M."/>
            <person name="Olsen G.J."/>
            <person name="Swanson R.V."/>
        </authorList>
    </citation>
    <scope>NUCLEOTIDE SEQUENCE [LARGE SCALE GENOMIC DNA]</scope>
    <source>
        <strain>VF5</strain>
    </source>
</reference>
<keyword id="KW-0002">3D-structure</keyword>
<keyword id="KW-0249">Electron transport</keyword>
<keyword id="KW-0285">Flavoprotein</keyword>
<keyword id="KW-0288">FMN</keyword>
<keyword id="KW-1185">Reference proteome</keyword>
<keyword id="KW-0813">Transport</keyword>
<gene>
    <name type="primary">fldA</name>
    <name type="synonym">floX</name>
    <name type="ordered locus">aq_2096</name>
</gene>
<evidence type="ECO:0000250" key="1"/>
<evidence type="ECO:0000255" key="2">
    <source>
        <dbReference type="PROSITE-ProRule" id="PRU00088"/>
    </source>
</evidence>
<evidence type="ECO:0000305" key="3"/>
<evidence type="ECO:0007829" key="4">
    <source>
        <dbReference type="PDB" id="2ARK"/>
    </source>
</evidence>
<protein>
    <recommendedName>
        <fullName>Flavodoxin</fullName>
    </recommendedName>
</protein>
<accession>O67866</accession>
<sequence>MGKVLVIYDTRTGNTKKMAELVAEGARSLEGTEVRLKHVDEATKEDVLWADGLAVGSPTNMGLVSWKMKRFFDDVLGDLWGEIDGKIACAFSSSGGWGGGNEVACMSILTMLMNFGFLVFGVTDYVGKKFTLHYGAVVAGEPRSEEEKEACRRLGRRLAEWVAIFVDGRKELLEKIRKDPARFVD</sequence>
<proteinExistence type="evidence at protein level"/>